<name>AB49G_ORYSJ</name>
<organism>
    <name type="scientific">Oryza sativa subsp. japonica</name>
    <name type="common">Rice</name>
    <dbReference type="NCBI Taxonomy" id="39947"/>
    <lineage>
        <taxon>Eukaryota</taxon>
        <taxon>Viridiplantae</taxon>
        <taxon>Streptophyta</taxon>
        <taxon>Embryophyta</taxon>
        <taxon>Tracheophyta</taxon>
        <taxon>Spermatophyta</taxon>
        <taxon>Magnoliopsida</taxon>
        <taxon>Liliopsida</taxon>
        <taxon>Poales</taxon>
        <taxon>Poaceae</taxon>
        <taxon>BOP clade</taxon>
        <taxon>Oryzoideae</taxon>
        <taxon>Oryzeae</taxon>
        <taxon>Oryzinae</taxon>
        <taxon>Oryza</taxon>
        <taxon>Oryza sativa</taxon>
    </lineage>
</organism>
<protein>
    <recommendedName>
        <fullName evidence="6">ABC transporter G family member 49</fullName>
        <shortName evidence="6">OsABCG49</shortName>
    </recommendedName>
    <alternativeName>
        <fullName evidence="5">Pleiotropic drug resistance protein 22</fullName>
        <shortName evidence="5">OsPDR22</shortName>
    </alternativeName>
</protein>
<accession>Q2QV81</accession>
<accession>B9GCJ4</accession>
<accession>C7J9R6</accession>
<accession>Q0IP72</accession>
<feature type="chain" id="PRO_0000433459" description="ABC transporter G family member 49">
    <location>
        <begin position="1"/>
        <end position="1480"/>
    </location>
</feature>
<feature type="transmembrane region" description="Helical" evidence="2">
    <location>
        <begin position="581"/>
        <end position="601"/>
    </location>
</feature>
<feature type="transmembrane region" description="Helical" evidence="2">
    <location>
        <begin position="619"/>
        <end position="639"/>
    </location>
</feature>
<feature type="transmembrane region" description="Helical" evidence="2">
    <location>
        <begin position="656"/>
        <end position="676"/>
    </location>
</feature>
<feature type="transmembrane region" description="Helical" evidence="2">
    <location>
        <begin position="699"/>
        <end position="719"/>
    </location>
</feature>
<feature type="transmembrane region" description="Helical" evidence="2">
    <location>
        <begin position="725"/>
        <end position="745"/>
    </location>
</feature>
<feature type="transmembrane region" description="Helical" evidence="2">
    <location>
        <begin position="811"/>
        <end position="831"/>
    </location>
</feature>
<feature type="transmembrane region" description="Helical" evidence="2">
    <location>
        <begin position="1226"/>
        <end position="1246"/>
    </location>
</feature>
<feature type="transmembrane region" description="Helical" evidence="2">
    <location>
        <begin position="1254"/>
        <end position="1274"/>
    </location>
</feature>
<feature type="transmembrane region" description="Helical" evidence="2">
    <location>
        <begin position="1311"/>
        <end position="1331"/>
    </location>
</feature>
<feature type="transmembrane region" description="Helical" evidence="2">
    <location>
        <begin position="1340"/>
        <end position="1360"/>
    </location>
</feature>
<feature type="transmembrane region" description="Helical" evidence="2">
    <location>
        <begin position="1368"/>
        <end position="1388"/>
    </location>
</feature>
<feature type="transmembrane region" description="Helical" evidence="2">
    <location>
        <begin position="1396"/>
        <end position="1416"/>
    </location>
</feature>
<feature type="transmembrane region" description="Helical" evidence="2">
    <location>
        <begin position="1449"/>
        <end position="1469"/>
    </location>
</feature>
<feature type="domain" description="ABC transporter 1" evidence="3">
    <location>
        <begin position="212"/>
        <end position="485"/>
    </location>
</feature>
<feature type="domain" description="ABC transmembrane type-2 1" evidence="7">
    <location>
        <begin position="563"/>
        <end position="775"/>
    </location>
</feature>
<feature type="domain" description="ABC transporter 2" evidence="3">
    <location>
        <begin position="877"/>
        <end position="1129"/>
    </location>
</feature>
<feature type="domain" description="ABC transmembrane type-2 2" evidence="7">
    <location>
        <begin position="1202"/>
        <end position="1418"/>
    </location>
</feature>
<feature type="region of interest" description="Disordered" evidence="4">
    <location>
        <begin position="1"/>
        <end position="42"/>
    </location>
</feature>
<feature type="region of interest" description="Disordered" evidence="4">
    <location>
        <begin position="60"/>
        <end position="81"/>
    </location>
</feature>
<feature type="region of interest" description="Disordered" evidence="4">
    <location>
        <begin position="104"/>
        <end position="124"/>
    </location>
</feature>
<feature type="compositionally biased region" description="Polar residues" evidence="4">
    <location>
        <begin position="1"/>
        <end position="18"/>
    </location>
</feature>
<feature type="compositionally biased region" description="Gly residues" evidence="4">
    <location>
        <begin position="63"/>
        <end position="73"/>
    </location>
</feature>
<feature type="compositionally biased region" description="Gly residues" evidence="4">
    <location>
        <begin position="107"/>
        <end position="123"/>
    </location>
</feature>
<feature type="binding site" evidence="3">
    <location>
        <begin position="245"/>
        <end position="252"/>
    </location>
    <ligand>
        <name>ATP</name>
        <dbReference type="ChEBI" id="CHEBI:30616"/>
        <label>1</label>
    </ligand>
</feature>
<feature type="binding site" evidence="3">
    <location>
        <begin position="922"/>
        <end position="929"/>
    </location>
    <ligand>
        <name>ATP</name>
        <dbReference type="ChEBI" id="CHEBI:30616"/>
        <label>2</label>
    </ligand>
</feature>
<dbReference type="EMBL" id="DP000011">
    <property type="protein sequence ID" value="ABA96866.2"/>
    <property type="status" value="ALT_SEQ"/>
    <property type="molecule type" value="Genomic_DNA"/>
</dbReference>
<dbReference type="EMBL" id="AP008218">
    <property type="protein sequence ID" value="BAF29493.1"/>
    <property type="status" value="ALT_SEQ"/>
    <property type="molecule type" value="Genomic_DNA"/>
</dbReference>
<dbReference type="EMBL" id="AP008218">
    <property type="protein sequence ID" value="BAH95593.1"/>
    <property type="status" value="ALT_SEQ"/>
    <property type="molecule type" value="Genomic_DNA"/>
</dbReference>
<dbReference type="EMBL" id="AP014968">
    <property type="status" value="NOT_ANNOTATED_CDS"/>
    <property type="molecule type" value="Genomic_DNA"/>
</dbReference>
<dbReference type="EMBL" id="CM000149">
    <property type="protein sequence ID" value="EEE53001.1"/>
    <property type="status" value="ALT_SEQ"/>
    <property type="molecule type" value="Genomic_DNA"/>
</dbReference>
<dbReference type="EMBL" id="AK107869">
    <property type="status" value="NOT_ANNOTATED_CDS"/>
    <property type="molecule type" value="mRNA"/>
</dbReference>
<dbReference type="SMR" id="Q2QV81"/>
<dbReference type="FunCoup" id="Q2QV81">
    <property type="interactions" value="144"/>
</dbReference>
<dbReference type="STRING" id="39947.Q2QV81"/>
<dbReference type="PaxDb" id="39947-Q2QV81"/>
<dbReference type="GeneID" id="9268322"/>
<dbReference type="KEGG" id="dosa:Os12g0239900"/>
<dbReference type="KEGG" id="dosa:Os12g0239950"/>
<dbReference type="KEGG" id="osa:9268322"/>
<dbReference type="InParanoid" id="Q2QV81"/>
<dbReference type="OrthoDB" id="66620at2759"/>
<dbReference type="Proteomes" id="UP000000763">
    <property type="component" value="Chromosome 12"/>
</dbReference>
<dbReference type="Proteomes" id="UP000007752">
    <property type="component" value="Chromosome 12"/>
</dbReference>
<dbReference type="Proteomes" id="UP000059680">
    <property type="component" value="Chromosome 12"/>
</dbReference>
<dbReference type="GO" id="GO:0005886">
    <property type="term" value="C:plasma membrane"/>
    <property type="evidence" value="ECO:0007669"/>
    <property type="project" value="UniProtKB-ARBA"/>
</dbReference>
<dbReference type="GO" id="GO:0140359">
    <property type="term" value="F:ABC-type transporter activity"/>
    <property type="evidence" value="ECO:0007669"/>
    <property type="project" value="InterPro"/>
</dbReference>
<dbReference type="GO" id="GO:0005524">
    <property type="term" value="F:ATP binding"/>
    <property type="evidence" value="ECO:0007669"/>
    <property type="project" value="UniProtKB-KW"/>
</dbReference>
<dbReference type="GO" id="GO:0016887">
    <property type="term" value="F:ATP hydrolysis activity"/>
    <property type="evidence" value="ECO:0007669"/>
    <property type="project" value="InterPro"/>
</dbReference>
<dbReference type="CDD" id="cd03232">
    <property type="entry name" value="ABCG_PDR_domain2"/>
    <property type="match status" value="1"/>
</dbReference>
<dbReference type="FunFam" id="3.40.50.300:FF:000157">
    <property type="entry name" value="ABC transporter G family member 34"/>
    <property type="match status" value="1"/>
</dbReference>
<dbReference type="FunFam" id="3.40.50.300:FF:000532">
    <property type="entry name" value="ABC transporter G family member 34"/>
    <property type="match status" value="1"/>
</dbReference>
<dbReference type="Gene3D" id="3.40.50.300">
    <property type="entry name" value="P-loop containing nucleotide triphosphate hydrolases"/>
    <property type="match status" value="2"/>
</dbReference>
<dbReference type="InterPro" id="IPR003593">
    <property type="entry name" value="AAA+_ATPase"/>
</dbReference>
<dbReference type="InterPro" id="IPR013525">
    <property type="entry name" value="ABC2_TM"/>
</dbReference>
<dbReference type="InterPro" id="IPR003439">
    <property type="entry name" value="ABC_transporter-like_ATP-bd"/>
</dbReference>
<dbReference type="InterPro" id="IPR043926">
    <property type="entry name" value="ABCG_dom"/>
</dbReference>
<dbReference type="InterPro" id="IPR034003">
    <property type="entry name" value="ABCG_PDR_2"/>
</dbReference>
<dbReference type="InterPro" id="IPR027417">
    <property type="entry name" value="P-loop_NTPase"/>
</dbReference>
<dbReference type="InterPro" id="IPR013581">
    <property type="entry name" value="PDR_assoc"/>
</dbReference>
<dbReference type="PANTHER" id="PTHR19241">
    <property type="entry name" value="ATP-BINDING CASSETTE TRANSPORTER"/>
    <property type="match status" value="1"/>
</dbReference>
<dbReference type="Pfam" id="PF01061">
    <property type="entry name" value="ABC2_membrane"/>
    <property type="match status" value="2"/>
</dbReference>
<dbReference type="Pfam" id="PF19055">
    <property type="entry name" value="ABC2_membrane_7"/>
    <property type="match status" value="2"/>
</dbReference>
<dbReference type="Pfam" id="PF00005">
    <property type="entry name" value="ABC_tran"/>
    <property type="match status" value="2"/>
</dbReference>
<dbReference type="Pfam" id="PF08370">
    <property type="entry name" value="PDR_assoc"/>
    <property type="match status" value="1"/>
</dbReference>
<dbReference type="SMART" id="SM00382">
    <property type="entry name" value="AAA"/>
    <property type="match status" value="2"/>
</dbReference>
<dbReference type="SUPFAM" id="SSF52540">
    <property type="entry name" value="P-loop containing nucleoside triphosphate hydrolases"/>
    <property type="match status" value="2"/>
</dbReference>
<dbReference type="PROSITE" id="PS50893">
    <property type="entry name" value="ABC_TRANSPORTER_2"/>
    <property type="match status" value="2"/>
</dbReference>
<comment type="function">
    <text evidence="1">May be a general defense protein.</text>
</comment>
<comment type="subcellular location">
    <subcellularLocation>
        <location evidence="2">Membrane</location>
        <topology evidence="2">Multi-pass membrane protein</topology>
    </subcellularLocation>
</comment>
<comment type="similarity">
    <text evidence="7">Belongs to the ABC transporter superfamily. ABCG family. PDR (TC 3.A.1.205) subfamily.</text>
</comment>
<comment type="sequence caution" evidence="7">
    <conflict type="erroneous gene model prediction">
        <sequence resource="EMBL-CDS" id="ABA96866"/>
    </conflict>
</comment>
<comment type="sequence caution" evidence="7">
    <conflict type="erroneous gene model prediction">
        <sequence resource="EMBL-CDS" id="BAF29493"/>
    </conflict>
    <text>Was originally thought to correspond to two different genes Os12g0239900 and Os12g0239950.</text>
</comment>
<comment type="sequence caution" evidence="7">
    <conflict type="erroneous gene model prediction">
        <sequence resource="EMBL-CDS" id="BAH95593"/>
    </conflict>
    <text>Was originally thought to correspond to two different genes Os12g0239900 and Os12g0239950.</text>
</comment>
<comment type="sequence caution" evidence="7">
    <conflict type="erroneous gene model prediction">
        <sequence resource="EMBL-CDS" id="EEE53001"/>
    </conflict>
</comment>
<gene>
    <name evidence="6" type="primary">ABCG49</name>
    <name evidence="5" type="synonym">PDR22</name>
    <name evidence="8 9" type="ordered locus">Os12g0239900/Os12g0239950</name>
    <name type="ordered locus">LOC_Os12g13720</name>
    <name evidence="10" type="ORF">OsJ_35688</name>
</gene>
<evidence type="ECO:0000250" key="1"/>
<evidence type="ECO:0000255" key="2"/>
<evidence type="ECO:0000255" key="3">
    <source>
        <dbReference type="PROSITE-ProRule" id="PRU00434"/>
    </source>
</evidence>
<evidence type="ECO:0000256" key="4">
    <source>
        <dbReference type="SAM" id="MobiDB-lite"/>
    </source>
</evidence>
<evidence type="ECO:0000303" key="5">
    <source>
    </source>
</evidence>
<evidence type="ECO:0000303" key="6">
    <source>
    </source>
</evidence>
<evidence type="ECO:0000305" key="7"/>
<evidence type="ECO:0000312" key="8">
    <source>
        <dbReference type="EMBL" id="BAF29493.1"/>
    </source>
</evidence>
<evidence type="ECO:0000312" key="9">
    <source>
        <dbReference type="EMBL" id="BAH95593.1"/>
    </source>
</evidence>
<evidence type="ECO:0000312" key="10">
    <source>
        <dbReference type="EMBL" id="EEE53001.1"/>
    </source>
</evidence>
<keyword id="KW-0067">ATP-binding</keyword>
<keyword id="KW-0472">Membrane</keyword>
<keyword id="KW-0547">Nucleotide-binding</keyword>
<keyword id="KW-1185">Reference proteome</keyword>
<keyword id="KW-0677">Repeat</keyword>
<keyword id="KW-0812">Transmembrane</keyword>
<keyword id="KW-1133">Transmembrane helix</keyword>
<keyword id="KW-0813">Transport</keyword>
<sequence length="1480" mass="165472">MHTTTQATPQKSMVMTTTNGGGVDPPQWPEEEEDEDAAAGSSCRVTAANGHHHHHQQLVVSGELGGGGGGGGGGREKEDDELKRKWAAIERLPTADRLRLSLLSSTRGGGSSGDVSEGGGGGAASSELEVVDVRWLGAAERRAVVQRLVADVKHDHVRMLRKQRERMERVGVRPATVEVRWRDVCVEAECQVVSGKPLPTLWNAALSRFSLLAAKLGFSHHQSKVQILENVSGIIKPSRITLLLGPPGCGKTTLLKALAGRLNKSLKETGEIEYNGVKLDEFVPAKTSAYVSQYDLHVADMTVRETLDFSARFQGVGSRAEIMKAVIKREKEAGITPDPDIDAYMKAISMEGLQRSMQTDYIMKIMGLDKCADVKVGNAMRRGISGGEMKRLTTGEMIVGPCKVLLMDEISTGLDSSTTFQIVSCLQQLAHISEYTILVSLLQPAPETYDLFDDIIIMGEGKVVYHGPKNLIMTFFESCGFKCPERKGPADFLQEVLSKKDQQQYWSRSEQWYNFITVDQFCDKFKASQVGQSLAEDLSKLYEKSKANKNALSCSIYSLSKWHLLKACFDRELLLMKRNAFLHITKAVQLGLLAIITGTVFFRTHKNFDIVSANYYMGSLFYALILLMVNGIPELVMSISRLPVFYKHRDHYLYPGWAYAIPAFILKIPASLVAALSWTSISYYLIGYTPEAPRYFRQLLVLFLVHTGALSLYRCVGSYCQTIAVGPIAATMSLLVILLFGGFLIPRPSMPNWLKWGFWLSPLSYAEIGLTGNEFLAPRWLKITISGVTIGRRILIDRGLDFSVYFYWISVAALIGFILLYNIGFAIGLTIKQSPGASQAIISNDKIRICHGRDQEKSKDIKIGTRRMALPFTPLTISFQDVNYYVDTPPEMRKKGYMGRKLQLLRNITGAFQPGILSALMGVTGAGKTTLLDVLAGRKTGGVIEGDIRIGGYPKVQQTFSRISGYCEQNDVHSPQITVGESVAYSAWLRLPAEIDTKTRKEFVDEVLEIIELDEIRDALVGTPGVNGLSREQRKRLTIAVELVSNPSIVFMDEPTSGLDARAAAIAMRAVKNVAETGRTVVCTIHQPSIEIFEAFDELMLIKRGGELIYAGPLGQHSCKVIQYFQSIPGVPKIKDNYNPSTWMLEVTSTSMEAQLGVDFAQIYTGSSIRKDKDELIKGFSMPPPGTSDLHFPTRFPQKFLEQFKACLWKQFLSHWRTPSYNLVRIVFMAFSSIIFGVLYWQQGNIRHINDQQGLFTILGCMYGITIFTGINNSQSAMPFVAVERSVMYRERFAGMYSPWAYSFAQVAMEIPYVLMLALLFMLIAYPTIGYAWTAAKFCWFFYTMFCTLLYFVYFGMLIVSITPNLQVASIYASSFYMTQHLLSGFVMPPSQIPKWWIWLYYISPMSWTLNLLFTTQFGFEDNSNILVFGETKPIAAFVRDYFGFHRELLPLSAIILAAYPVLFAILYGYSISRFNFQKR</sequence>
<proteinExistence type="evidence at transcript level"/>
<reference key="1">
    <citation type="journal article" date="2005" name="BMC Biol.">
        <title>The sequence of rice chromosomes 11 and 12, rich in disease resistance genes and recent gene duplications.</title>
        <authorList>
            <consortium name="The rice chromosomes 11 and 12 sequencing consortia"/>
        </authorList>
    </citation>
    <scope>NUCLEOTIDE SEQUENCE [LARGE SCALE GENOMIC DNA]</scope>
    <source>
        <strain>cv. Nipponbare</strain>
    </source>
</reference>
<reference key="2">
    <citation type="journal article" date="2005" name="Nature">
        <title>The map-based sequence of the rice genome.</title>
        <authorList>
            <consortium name="International rice genome sequencing project (IRGSP)"/>
        </authorList>
    </citation>
    <scope>NUCLEOTIDE SEQUENCE [LARGE SCALE GENOMIC DNA]</scope>
    <source>
        <strain>cv. Nipponbare</strain>
    </source>
</reference>
<reference key="3">
    <citation type="journal article" date="2008" name="Nucleic Acids Res.">
        <title>The rice annotation project database (RAP-DB): 2008 update.</title>
        <authorList>
            <consortium name="The rice annotation project (RAP)"/>
        </authorList>
    </citation>
    <scope>GENOME REANNOTATION</scope>
    <source>
        <strain>cv. Nipponbare</strain>
    </source>
</reference>
<reference key="4">
    <citation type="journal article" date="2013" name="Rice">
        <title>Improvement of the Oryza sativa Nipponbare reference genome using next generation sequence and optical map data.</title>
        <authorList>
            <person name="Kawahara Y."/>
            <person name="de la Bastide M."/>
            <person name="Hamilton J.P."/>
            <person name="Kanamori H."/>
            <person name="McCombie W.R."/>
            <person name="Ouyang S."/>
            <person name="Schwartz D.C."/>
            <person name="Tanaka T."/>
            <person name="Wu J."/>
            <person name="Zhou S."/>
            <person name="Childs K.L."/>
            <person name="Davidson R.M."/>
            <person name="Lin H."/>
            <person name="Quesada-Ocampo L."/>
            <person name="Vaillancourt B."/>
            <person name="Sakai H."/>
            <person name="Lee S.S."/>
            <person name="Kim J."/>
            <person name="Numa H."/>
            <person name="Itoh T."/>
            <person name="Buell C.R."/>
            <person name="Matsumoto T."/>
        </authorList>
    </citation>
    <scope>GENOME REANNOTATION</scope>
    <source>
        <strain>cv. Nipponbare</strain>
    </source>
</reference>
<reference key="5">
    <citation type="journal article" date="2005" name="PLoS Biol.">
        <title>The genomes of Oryza sativa: a history of duplications.</title>
        <authorList>
            <person name="Yu J."/>
            <person name="Wang J."/>
            <person name="Lin W."/>
            <person name="Li S."/>
            <person name="Li H."/>
            <person name="Zhou J."/>
            <person name="Ni P."/>
            <person name="Dong W."/>
            <person name="Hu S."/>
            <person name="Zeng C."/>
            <person name="Zhang J."/>
            <person name="Zhang Y."/>
            <person name="Li R."/>
            <person name="Xu Z."/>
            <person name="Li S."/>
            <person name="Li X."/>
            <person name="Zheng H."/>
            <person name="Cong L."/>
            <person name="Lin L."/>
            <person name="Yin J."/>
            <person name="Geng J."/>
            <person name="Li G."/>
            <person name="Shi J."/>
            <person name="Liu J."/>
            <person name="Lv H."/>
            <person name="Li J."/>
            <person name="Wang J."/>
            <person name="Deng Y."/>
            <person name="Ran L."/>
            <person name="Shi X."/>
            <person name="Wang X."/>
            <person name="Wu Q."/>
            <person name="Li C."/>
            <person name="Ren X."/>
            <person name="Wang J."/>
            <person name="Wang X."/>
            <person name="Li D."/>
            <person name="Liu D."/>
            <person name="Zhang X."/>
            <person name="Ji Z."/>
            <person name="Zhao W."/>
            <person name="Sun Y."/>
            <person name="Zhang Z."/>
            <person name="Bao J."/>
            <person name="Han Y."/>
            <person name="Dong L."/>
            <person name="Ji J."/>
            <person name="Chen P."/>
            <person name="Wu S."/>
            <person name="Liu J."/>
            <person name="Xiao Y."/>
            <person name="Bu D."/>
            <person name="Tan J."/>
            <person name="Yang L."/>
            <person name="Ye C."/>
            <person name="Zhang J."/>
            <person name="Xu J."/>
            <person name="Zhou Y."/>
            <person name="Yu Y."/>
            <person name="Zhang B."/>
            <person name="Zhuang S."/>
            <person name="Wei H."/>
            <person name="Liu B."/>
            <person name="Lei M."/>
            <person name="Yu H."/>
            <person name="Li Y."/>
            <person name="Xu H."/>
            <person name="Wei S."/>
            <person name="He X."/>
            <person name="Fang L."/>
            <person name="Zhang Z."/>
            <person name="Zhang Y."/>
            <person name="Huang X."/>
            <person name="Su Z."/>
            <person name="Tong W."/>
            <person name="Li J."/>
            <person name="Tong Z."/>
            <person name="Li S."/>
            <person name="Ye J."/>
            <person name="Wang L."/>
            <person name="Fang L."/>
            <person name="Lei T."/>
            <person name="Chen C.-S."/>
            <person name="Chen H.-C."/>
            <person name="Xu Z."/>
            <person name="Li H."/>
            <person name="Huang H."/>
            <person name="Zhang F."/>
            <person name="Xu H."/>
            <person name="Li N."/>
            <person name="Zhao C."/>
            <person name="Li S."/>
            <person name="Dong L."/>
            <person name="Huang Y."/>
            <person name="Li L."/>
            <person name="Xi Y."/>
            <person name="Qi Q."/>
            <person name="Li W."/>
            <person name="Zhang B."/>
            <person name="Hu W."/>
            <person name="Zhang Y."/>
            <person name="Tian X."/>
            <person name="Jiao Y."/>
            <person name="Liang X."/>
            <person name="Jin J."/>
            <person name="Gao L."/>
            <person name="Zheng W."/>
            <person name="Hao B."/>
            <person name="Liu S.-M."/>
            <person name="Wang W."/>
            <person name="Yuan L."/>
            <person name="Cao M."/>
            <person name="McDermott J."/>
            <person name="Samudrala R."/>
            <person name="Wang J."/>
            <person name="Wong G.K.-S."/>
            <person name="Yang H."/>
        </authorList>
    </citation>
    <scope>NUCLEOTIDE SEQUENCE [LARGE SCALE GENOMIC DNA]</scope>
    <source>
        <strain>cv. Nipponbare</strain>
    </source>
</reference>
<reference key="6">
    <citation type="journal article" date="2003" name="Science">
        <title>Collection, mapping, and annotation of over 28,000 cDNA clones from japonica rice.</title>
        <authorList>
            <consortium name="The rice full-length cDNA consortium"/>
        </authorList>
    </citation>
    <scope>NUCLEOTIDE SEQUENCE [LARGE SCALE MRNA] OF 1409-1480</scope>
    <source>
        <strain>cv. Nipponbare</strain>
    </source>
</reference>
<reference key="7">
    <citation type="journal article" date="2006" name="FEBS Lett.">
        <title>Organization and function of the plant pleiotropic drug resistance ABC transporter family.</title>
        <authorList>
            <person name="Crouzet J."/>
            <person name="Trombik T."/>
            <person name="Fraysse A.S."/>
            <person name="Boutry M."/>
        </authorList>
    </citation>
    <scope>GENE FAMILY</scope>
    <scope>NOMENCLATURE</scope>
</reference>
<reference key="8">
    <citation type="journal article" date="2008" name="Trends Plant Sci.">
        <title>Plant ABC proteins - a unified nomenclature and updated inventory.</title>
        <authorList>
            <person name="Verrier P.J."/>
            <person name="Bird D."/>
            <person name="Burla B."/>
            <person name="Dassa E."/>
            <person name="Forestier C."/>
            <person name="Geisler M."/>
            <person name="Klein M."/>
            <person name="Kolukisaoglu H.U."/>
            <person name="Lee Y."/>
            <person name="Martinoia E."/>
            <person name="Murphy A."/>
            <person name="Rea P.A."/>
            <person name="Samuels L."/>
            <person name="Schulz B."/>
            <person name="Spalding E.J."/>
            <person name="Yazaki K."/>
            <person name="Theodoulou F.L."/>
        </authorList>
    </citation>
    <scope>GENE FAMILY</scope>
    <scope>NOMENCLATURE</scope>
</reference>